<proteinExistence type="inferred from homology"/>
<evidence type="ECO:0000255" key="1">
    <source>
        <dbReference type="HAMAP-Rule" id="MF_01870"/>
    </source>
</evidence>
<keyword id="KW-0046">Antibiotic resistance</keyword>
<keyword id="KW-0378">Hydrolase</keyword>
<keyword id="KW-0441">Lipid A biosynthesis</keyword>
<keyword id="KW-0444">Lipid biosynthesis</keyword>
<keyword id="KW-0443">Lipid metabolism</keyword>
<keyword id="KW-0448">Lipopolysaccharide biosynthesis</keyword>
<keyword id="KW-1185">Reference proteome</keyword>
<dbReference type="EC" id="3.5.1.n3" evidence="1"/>
<dbReference type="EMBL" id="AE005674">
    <property type="protein sequence ID" value="AAN43849.1"/>
    <property type="molecule type" value="Genomic_DNA"/>
</dbReference>
<dbReference type="EMBL" id="AE014073">
    <property type="protein sequence ID" value="AAP17668.1"/>
    <property type="molecule type" value="Genomic_DNA"/>
</dbReference>
<dbReference type="RefSeq" id="NP_708142.1">
    <property type="nucleotide sequence ID" value="NC_004337.2"/>
</dbReference>
<dbReference type="RefSeq" id="WP_000169701.1">
    <property type="nucleotide sequence ID" value="NZ_WPGW01000032.1"/>
</dbReference>
<dbReference type="SMR" id="Q83KB7"/>
<dbReference type="STRING" id="198214.SF2335"/>
<dbReference type="PaxDb" id="198214-SF2335"/>
<dbReference type="GeneID" id="1025486"/>
<dbReference type="KEGG" id="sfl:SF2335"/>
<dbReference type="KEGG" id="sfx:S2468"/>
<dbReference type="PATRIC" id="fig|198214.7.peg.2798"/>
<dbReference type="HOGENOM" id="CLU_084199_0_0_6"/>
<dbReference type="UniPathway" id="UPA00030"/>
<dbReference type="UniPathway" id="UPA00036">
    <property type="reaction ID" value="UER00496"/>
</dbReference>
<dbReference type="Proteomes" id="UP000001006">
    <property type="component" value="Chromosome"/>
</dbReference>
<dbReference type="Proteomes" id="UP000002673">
    <property type="component" value="Chromosome"/>
</dbReference>
<dbReference type="GO" id="GO:0016020">
    <property type="term" value="C:membrane"/>
    <property type="evidence" value="ECO:0007669"/>
    <property type="project" value="GOC"/>
</dbReference>
<dbReference type="GO" id="GO:0016811">
    <property type="term" value="F:hydrolase activity, acting on carbon-nitrogen (but not peptide) bonds, in linear amides"/>
    <property type="evidence" value="ECO:0007669"/>
    <property type="project" value="UniProtKB-UniRule"/>
</dbReference>
<dbReference type="GO" id="GO:0036108">
    <property type="term" value="P:4-amino-4-deoxy-alpha-L-arabinopyranosyl undecaprenyl phosphate biosynthetic process"/>
    <property type="evidence" value="ECO:0007669"/>
    <property type="project" value="UniProtKB-UniRule"/>
</dbReference>
<dbReference type="GO" id="GO:0009245">
    <property type="term" value="P:lipid A biosynthetic process"/>
    <property type="evidence" value="ECO:0007669"/>
    <property type="project" value="UniProtKB-UniRule"/>
</dbReference>
<dbReference type="GO" id="GO:0009103">
    <property type="term" value="P:lipopolysaccharide biosynthetic process"/>
    <property type="evidence" value="ECO:0007669"/>
    <property type="project" value="UniProtKB-UniRule"/>
</dbReference>
<dbReference type="GO" id="GO:0046677">
    <property type="term" value="P:response to antibiotic"/>
    <property type="evidence" value="ECO:0007669"/>
    <property type="project" value="UniProtKB-KW"/>
</dbReference>
<dbReference type="CDD" id="cd10939">
    <property type="entry name" value="CE4_ArnD"/>
    <property type="match status" value="1"/>
</dbReference>
<dbReference type="Gene3D" id="3.20.20.370">
    <property type="entry name" value="Glycoside hydrolase/deacetylase"/>
    <property type="match status" value="1"/>
</dbReference>
<dbReference type="HAMAP" id="MF_01870">
    <property type="entry name" value="ArnD"/>
    <property type="match status" value="1"/>
</dbReference>
<dbReference type="InterPro" id="IPR023557">
    <property type="entry name" value="ArnD"/>
</dbReference>
<dbReference type="InterPro" id="IPR011330">
    <property type="entry name" value="Glyco_hydro/deAcase_b/a-brl"/>
</dbReference>
<dbReference type="InterPro" id="IPR002509">
    <property type="entry name" value="NODB_dom"/>
</dbReference>
<dbReference type="InterPro" id="IPR050248">
    <property type="entry name" value="Polysacc_deacetylase_ArnD"/>
</dbReference>
<dbReference type="NCBIfam" id="NF011923">
    <property type="entry name" value="PRK15394.1"/>
    <property type="match status" value="1"/>
</dbReference>
<dbReference type="PANTHER" id="PTHR10587:SF137">
    <property type="entry name" value="4-DEOXY-4-FORMAMIDO-L-ARABINOSE-PHOSPHOUNDECAPRENOL DEFORMYLASE ARND-RELATED"/>
    <property type="match status" value="1"/>
</dbReference>
<dbReference type="PANTHER" id="PTHR10587">
    <property type="entry name" value="GLYCOSYL TRANSFERASE-RELATED"/>
    <property type="match status" value="1"/>
</dbReference>
<dbReference type="Pfam" id="PF01522">
    <property type="entry name" value="Polysacc_deac_1"/>
    <property type="match status" value="1"/>
</dbReference>
<dbReference type="SUPFAM" id="SSF88713">
    <property type="entry name" value="Glycoside hydrolase/deacetylase"/>
    <property type="match status" value="1"/>
</dbReference>
<dbReference type="PROSITE" id="PS51677">
    <property type="entry name" value="NODB"/>
    <property type="match status" value="1"/>
</dbReference>
<protein>
    <recommendedName>
        <fullName evidence="1">Probable 4-deoxy-4-formamido-L-arabinose-phosphoundecaprenol deformylase ArnD</fullName>
        <ecNumber evidence="1">3.5.1.n3</ecNumber>
    </recommendedName>
</protein>
<name>ARND_SHIFL</name>
<accession>Q83KB7</accession>
<accession>Q7C0R3</accession>
<feature type="chain" id="PRO_0000383545" description="Probable 4-deoxy-4-formamido-L-arabinose-phosphoundecaprenol deformylase ArnD">
    <location>
        <begin position="1"/>
        <end position="296"/>
    </location>
</feature>
<feature type="domain" description="NodB homology" evidence="1">
    <location>
        <begin position="2"/>
        <end position="260"/>
    </location>
</feature>
<sequence>MTKVGLRIDVDAFRGTREGVPRLLEILSKHNIQASIFFSVGPDNMGRHLWRLVKPQFLWKMLRSNAASLYGWDILLAGTAWPGKEIGHANADIIREAAKHHEVGLHAWDHHAWQARSGNWDRQTMIDDIARGLRTLEEIIGQPVTCSAAAGWRADQKVIEAKEAFHLRYNSDCRGAIPFRPLLESGNPGTAQIPVTLPTWDEVIGRDVKAEDFNGWLLNRILRDKGTPVYTIHAEVEGCAYQHNFVDLLKRAAQEGVTFCPLSELLSETLPLGQVVRGNIAGREGWLGCQQIAGSR</sequence>
<gene>
    <name evidence="1" type="primary">arnD</name>
    <name type="ordered locus">SF2335</name>
    <name type="ordered locus">S2468</name>
</gene>
<reference key="1">
    <citation type="journal article" date="2002" name="Nucleic Acids Res.">
        <title>Genome sequence of Shigella flexneri 2a: insights into pathogenicity through comparison with genomes of Escherichia coli K12 and O157.</title>
        <authorList>
            <person name="Jin Q."/>
            <person name="Yuan Z."/>
            <person name="Xu J."/>
            <person name="Wang Y."/>
            <person name="Shen Y."/>
            <person name="Lu W."/>
            <person name="Wang J."/>
            <person name="Liu H."/>
            <person name="Yang J."/>
            <person name="Yang F."/>
            <person name="Zhang X."/>
            <person name="Zhang J."/>
            <person name="Yang G."/>
            <person name="Wu H."/>
            <person name="Qu D."/>
            <person name="Dong J."/>
            <person name="Sun L."/>
            <person name="Xue Y."/>
            <person name="Zhao A."/>
            <person name="Gao Y."/>
            <person name="Zhu J."/>
            <person name="Kan B."/>
            <person name="Ding K."/>
            <person name="Chen S."/>
            <person name="Cheng H."/>
            <person name="Yao Z."/>
            <person name="He B."/>
            <person name="Chen R."/>
            <person name="Ma D."/>
            <person name="Qiang B."/>
            <person name="Wen Y."/>
            <person name="Hou Y."/>
            <person name="Yu J."/>
        </authorList>
    </citation>
    <scope>NUCLEOTIDE SEQUENCE [LARGE SCALE GENOMIC DNA]</scope>
    <source>
        <strain>301 / Serotype 2a</strain>
    </source>
</reference>
<reference key="2">
    <citation type="journal article" date="2003" name="Infect. Immun.">
        <title>Complete genome sequence and comparative genomics of Shigella flexneri serotype 2a strain 2457T.</title>
        <authorList>
            <person name="Wei J."/>
            <person name="Goldberg M.B."/>
            <person name="Burland V."/>
            <person name="Venkatesan M.M."/>
            <person name="Deng W."/>
            <person name="Fournier G."/>
            <person name="Mayhew G.F."/>
            <person name="Plunkett G. III"/>
            <person name="Rose D.J."/>
            <person name="Darling A."/>
            <person name="Mau B."/>
            <person name="Perna N.T."/>
            <person name="Payne S.M."/>
            <person name="Runyen-Janecky L.J."/>
            <person name="Zhou S."/>
            <person name="Schwartz D.C."/>
            <person name="Blattner F.R."/>
        </authorList>
    </citation>
    <scope>NUCLEOTIDE SEQUENCE [LARGE SCALE GENOMIC DNA]</scope>
    <source>
        <strain>ATCC 700930 / 2457T / Serotype 2a</strain>
    </source>
</reference>
<comment type="function">
    <text evidence="1">Catalyzes the deformylation of 4-deoxy-4-formamido-L-arabinose-phosphoundecaprenol to 4-amino-4-deoxy-L-arabinose-phosphoundecaprenol. The modified arabinose is attached to lipid A and is required for resistance to polymyxin and cationic antimicrobial peptides.</text>
</comment>
<comment type="catalytic activity">
    <reaction evidence="1">
        <text>4-deoxy-4-formamido-alpha-L-arabinopyranosyl di-trans,octa-cis-undecaprenyl phosphate + H2O = 4-amino-4-deoxy-alpha-L-arabinopyranosyl di-trans,octa-cis-undecaprenyl phosphate + formate</text>
        <dbReference type="Rhea" id="RHEA:27734"/>
        <dbReference type="ChEBI" id="CHEBI:15377"/>
        <dbReference type="ChEBI" id="CHEBI:15740"/>
        <dbReference type="ChEBI" id="CHEBI:58909"/>
        <dbReference type="ChEBI" id="CHEBI:60463"/>
        <dbReference type="EC" id="3.5.1.n3"/>
    </reaction>
</comment>
<comment type="pathway">
    <text evidence="1">Glycolipid biosynthesis; 4-amino-4-deoxy-alpha-L-arabinose undecaprenyl phosphate biosynthesis; 4-amino-4-deoxy-alpha-L-arabinose undecaprenyl phosphate from UDP-4-deoxy-4-formamido-beta-L-arabinose and undecaprenyl phosphate: step 2/2.</text>
</comment>
<comment type="pathway">
    <text evidence="1">Bacterial outer membrane biogenesis; lipopolysaccharide biosynthesis.</text>
</comment>
<comment type="similarity">
    <text evidence="1">Belongs to the polysaccharide deacetylase family. ArnD deformylase subfamily.</text>
</comment>
<organism>
    <name type="scientific">Shigella flexneri</name>
    <dbReference type="NCBI Taxonomy" id="623"/>
    <lineage>
        <taxon>Bacteria</taxon>
        <taxon>Pseudomonadati</taxon>
        <taxon>Pseudomonadota</taxon>
        <taxon>Gammaproteobacteria</taxon>
        <taxon>Enterobacterales</taxon>
        <taxon>Enterobacteriaceae</taxon>
        <taxon>Shigella</taxon>
    </lineage>
</organism>